<protein>
    <recommendedName>
        <fullName>Zinc finger protein 239</fullName>
    </recommendedName>
    <alternativeName>
        <fullName>Zinc finger protein HOK-2</fullName>
    </alternativeName>
    <alternativeName>
        <fullName>Zinc finger protein MOK-2</fullName>
    </alternativeName>
</protein>
<comment type="function">
    <text>May be involved in transcriptional regulation.</text>
</comment>
<comment type="interaction">
    <interactant intactId="EBI-8787052">
        <id>Q16600</id>
    </interactant>
    <interactant intactId="EBI-3866279">
        <id>Q9BWT7</id>
        <label>CARD10</label>
    </interactant>
    <organismsDiffer>false</organismsDiffer>
    <experiments>3</experiments>
</comment>
<comment type="interaction">
    <interactant intactId="EBI-8787052">
        <id>Q16600</id>
    </interactant>
    <interactant intactId="EBI-739624">
        <id>Q8NHQ1</id>
        <label>CEP70</label>
    </interactant>
    <organismsDiffer>false</organismsDiffer>
    <experiments>6</experiments>
</comment>
<comment type="interaction">
    <interactant intactId="EBI-8787052">
        <id>Q16600</id>
    </interactant>
    <interactant intactId="EBI-747754">
        <id>P28799</id>
        <label>GRN</label>
    </interactant>
    <organismsDiffer>false</organismsDiffer>
    <experiments>3</experiments>
</comment>
<comment type="interaction">
    <interactant intactId="EBI-8787052">
        <id>Q16600</id>
    </interactant>
    <interactant intactId="EBI-12012928">
        <id>P60371</id>
        <label>KRTAP10-6</label>
    </interactant>
    <organismsDiffer>false</organismsDiffer>
    <experiments>3</experiments>
</comment>
<comment type="interaction">
    <interactant intactId="EBI-8787052">
        <id>Q16600</id>
    </interactant>
    <interactant intactId="EBI-11522433">
        <id>Q5JR59-3</id>
        <label>MTUS2</label>
    </interactant>
    <organismsDiffer>false</organismsDiffer>
    <experiments>3</experiments>
</comment>
<comment type="interaction">
    <interactant intactId="EBI-8787052">
        <id>Q16600</id>
    </interactant>
    <interactant intactId="EBI-5235340">
        <id>Q7Z699</id>
        <label>SPRED1</label>
    </interactant>
    <organismsDiffer>false</organismsDiffer>
    <experiments>3</experiments>
</comment>
<comment type="interaction">
    <interactant intactId="EBI-8787052">
        <id>Q16600</id>
    </interactant>
    <interactant intactId="EBI-720609">
        <id>O76024</id>
        <label>WFS1</label>
    </interactant>
    <organismsDiffer>false</organismsDiffer>
    <experiments>3</experiments>
</comment>
<comment type="interaction">
    <interactant intactId="EBI-8787052">
        <id>Q16600</id>
    </interactant>
    <interactant intactId="EBI-751647">
        <id>Q15007</id>
        <label>WTAP</label>
    </interactant>
    <organismsDiffer>false</organismsDiffer>
    <experiments>3</experiments>
</comment>
<comment type="subcellular location">
    <subcellularLocation>
        <location evidence="3">Nucleus</location>
    </subcellularLocation>
</comment>
<comment type="similarity">
    <text evidence="3">Belongs to the krueppel C2H2-type zinc-finger protein family.</text>
</comment>
<sequence length="458" mass="51591">MASTITGSQDCIVNHRGEVDGEPELDISPCQQWGEASSPISRNRDSVMTLQSGCFENIESETYLPLKVSSQIDTQDSSVKFCKNEPQDHQESRRLFVMEESTERKVIKGESCSENLQVKLVSDGQELASPLLNGEATCQNGQLKESLDPIDCNCKDIHGWKSQVVSCSQQRAHTEEKPCDHNNCGKILNTSPDGHPYEKIHTAEKQYECSQCGKNFSQSSELLLHQRDHTEEKPYKCEQCGKGFTRSSSLLIHQAVHTDEKPYKCDKCGKGFTRSSSLLIHHAVHTGEKPYKCDKCGKGFSQSSKLHIHQRVHTGEKPYECEECGMSFSQRSNLHIHQRVHTGERPYKCGECGKGFSQSSNLHIHRCIHTGEKPYQCYECGKGFSQSSDLRIHLRVHTGEKPYHCGKCGKGFSQSSKLLIHQRVHTGEKPYECSKCGKGFSQSSNLHIHQRVHKKDPR</sequence>
<evidence type="ECO:0000255" key="1">
    <source>
        <dbReference type="PROSITE-ProRule" id="PRU00042"/>
    </source>
</evidence>
<evidence type="ECO:0000269" key="2">
    <source>
    </source>
</evidence>
<evidence type="ECO:0000305" key="3"/>
<evidence type="ECO:0007744" key="4">
    <source>
    </source>
</evidence>
<evidence type="ECO:0007744" key="5">
    <source>
    </source>
</evidence>
<gene>
    <name type="primary">ZNF239</name>
    <name type="synonym">HOK2</name>
    <name type="synonym">MOK2</name>
</gene>
<proteinExistence type="evidence at protein level"/>
<feature type="chain" id="PRO_0000047480" description="Zinc finger protein 239">
    <location>
        <begin position="1"/>
        <end position="458"/>
    </location>
</feature>
<feature type="zinc finger region" description="C2H2-type 1" evidence="1">
    <location>
        <begin position="207"/>
        <end position="229"/>
    </location>
</feature>
<feature type="zinc finger region" description="C2H2-type 2" evidence="1">
    <location>
        <begin position="235"/>
        <end position="257"/>
    </location>
</feature>
<feature type="zinc finger region" description="C2H2-type 3" evidence="1">
    <location>
        <begin position="263"/>
        <end position="285"/>
    </location>
</feature>
<feature type="zinc finger region" description="C2H2-type 4" evidence="1">
    <location>
        <begin position="291"/>
        <end position="313"/>
    </location>
</feature>
<feature type="zinc finger region" description="C2H2-type 5" evidence="1">
    <location>
        <begin position="319"/>
        <end position="341"/>
    </location>
</feature>
<feature type="zinc finger region" description="C2H2-type 6" evidence="1">
    <location>
        <begin position="347"/>
        <end position="369"/>
    </location>
</feature>
<feature type="zinc finger region" description="C2H2-type 7" evidence="1">
    <location>
        <begin position="375"/>
        <end position="397"/>
    </location>
</feature>
<feature type="zinc finger region" description="C2H2-type 8" evidence="1">
    <location>
        <begin position="403"/>
        <end position="425"/>
    </location>
</feature>
<feature type="zinc finger region" description="C2H2-type 9" evidence="1">
    <location>
        <begin position="431"/>
        <end position="453"/>
    </location>
</feature>
<feature type="modified residue" description="Phosphoserine" evidence="4">
    <location>
        <position position="191"/>
    </location>
</feature>
<feature type="cross-link" description="Glycyl lysine isopeptide (Lys-Gly) (interchain with G-Cter in SUMO2)" evidence="5">
    <location>
        <position position="108"/>
    </location>
</feature>
<feature type="sequence variant" id="VAR_024205" description="In dbSNP:rs2230660." evidence="2">
    <original>A</original>
    <variation>G</variation>
    <location>
        <position position="172"/>
    </location>
</feature>
<feature type="sequence variant" id="VAR_024206" description="In dbSNP:rs2230661." evidence="2">
    <original>C</original>
    <variation>G</variation>
    <location>
        <position position="209"/>
    </location>
</feature>
<feature type="sequence variant" id="VAR_025536" description="In dbSNP:rs1128865." evidence="2">
    <original>D</original>
    <variation>E</variation>
    <location>
        <position position="266"/>
    </location>
</feature>
<feature type="sequence conflict" description="In Ref. 1; CAA57637/CAA57638." evidence="3" ref="1">
    <original>V</original>
    <variation>D</variation>
    <location>
        <position position="340"/>
    </location>
</feature>
<feature type="sequence conflict" description="In Ref. 1; CAA57637/CAA57638." evidence="3" ref="1">
    <original>I</original>
    <variation>S</variation>
    <location>
        <position position="448"/>
    </location>
</feature>
<name>ZN239_HUMAN</name>
<reference key="1">
    <citation type="journal article" date="1995" name="J. Mol. Evol.">
        <title>Human and mouse Kruppel-like (MOK2) orthologue genes encode two different zinc finger proteins.</title>
        <authorList>
            <person name="Ernoult-Lange M."/>
            <person name="Arranz V."/>
            <person name="le Coniat M."/>
            <person name="Berger R."/>
            <person name="Kress M."/>
        </authorList>
    </citation>
    <scope>NUCLEOTIDE SEQUENCE [GENOMIC DNA / MRNA]</scope>
    <scope>VARIANTS GLY-172; GLY-209 AND GLU-266</scope>
</reference>
<reference key="2">
    <citation type="journal article" date="2004" name="Nature">
        <title>The DNA sequence and biology of human chromosome 19.</title>
        <authorList>
            <person name="Grimwood J."/>
            <person name="Gordon L.A."/>
            <person name="Olsen A.S."/>
            <person name="Terry A."/>
            <person name="Schmutz J."/>
            <person name="Lamerdin J.E."/>
            <person name="Hellsten U."/>
            <person name="Goodstein D."/>
            <person name="Couronne O."/>
            <person name="Tran-Gyamfi M."/>
            <person name="Aerts A."/>
            <person name="Altherr M."/>
            <person name="Ashworth L."/>
            <person name="Bajorek E."/>
            <person name="Black S."/>
            <person name="Branscomb E."/>
            <person name="Caenepeel S."/>
            <person name="Carrano A.V."/>
            <person name="Caoile C."/>
            <person name="Chan Y.M."/>
            <person name="Christensen M."/>
            <person name="Cleland C.A."/>
            <person name="Copeland A."/>
            <person name="Dalin E."/>
            <person name="Dehal P."/>
            <person name="Denys M."/>
            <person name="Detter J.C."/>
            <person name="Escobar J."/>
            <person name="Flowers D."/>
            <person name="Fotopulos D."/>
            <person name="Garcia C."/>
            <person name="Georgescu A.M."/>
            <person name="Glavina T."/>
            <person name="Gomez M."/>
            <person name="Gonzales E."/>
            <person name="Groza M."/>
            <person name="Hammon N."/>
            <person name="Hawkins T."/>
            <person name="Haydu L."/>
            <person name="Ho I."/>
            <person name="Huang W."/>
            <person name="Israni S."/>
            <person name="Jett J."/>
            <person name="Kadner K."/>
            <person name="Kimball H."/>
            <person name="Kobayashi A."/>
            <person name="Larionov V."/>
            <person name="Leem S.-H."/>
            <person name="Lopez F."/>
            <person name="Lou Y."/>
            <person name="Lowry S."/>
            <person name="Malfatti S."/>
            <person name="Martinez D."/>
            <person name="McCready P.M."/>
            <person name="Medina C."/>
            <person name="Morgan J."/>
            <person name="Nelson K."/>
            <person name="Nolan M."/>
            <person name="Ovcharenko I."/>
            <person name="Pitluck S."/>
            <person name="Pollard M."/>
            <person name="Popkie A.P."/>
            <person name="Predki P."/>
            <person name="Quan G."/>
            <person name="Ramirez L."/>
            <person name="Rash S."/>
            <person name="Retterer J."/>
            <person name="Rodriguez A."/>
            <person name="Rogers S."/>
            <person name="Salamov A."/>
            <person name="Salazar A."/>
            <person name="She X."/>
            <person name="Smith D."/>
            <person name="Slezak T."/>
            <person name="Solovyev V."/>
            <person name="Thayer N."/>
            <person name="Tice H."/>
            <person name="Tsai M."/>
            <person name="Ustaszewska A."/>
            <person name="Vo N."/>
            <person name="Wagner M."/>
            <person name="Wheeler J."/>
            <person name="Wu K."/>
            <person name="Xie G."/>
            <person name="Yang J."/>
            <person name="Dubchak I."/>
            <person name="Furey T.S."/>
            <person name="DeJong P."/>
            <person name="Dickson M."/>
            <person name="Gordon D."/>
            <person name="Eichler E.E."/>
            <person name="Pennacchio L.A."/>
            <person name="Richardson P."/>
            <person name="Stubbs L."/>
            <person name="Rokhsar D.S."/>
            <person name="Myers R.M."/>
            <person name="Rubin E.M."/>
            <person name="Lucas S.M."/>
        </authorList>
    </citation>
    <scope>NUCLEOTIDE SEQUENCE [LARGE SCALE GENOMIC DNA]</scope>
</reference>
<reference key="3">
    <citation type="journal article" date="2004" name="Genome Res.">
        <title>The status, quality, and expansion of the NIH full-length cDNA project: the Mammalian Gene Collection (MGC).</title>
        <authorList>
            <consortium name="The MGC Project Team"/>
        </authorList>
    </citation>
    <scope>NUCLEOTIDE SEQUENCE [LARGE SCALE MRNA]</scope>
    <source>
        <tissue>Brain</tissue>
    </source>
</reference>
<reference key="4">
    <citation type="journal article" date="2013" name="J. Proteome Res.">
        <title>Toward a comprehensive characterization of a human cancer cell phosphoproteome.</title>
        <authorList>
            <person name="Zhou H."/>
            <person name="Di Palma S."/>
            <person name="Preisinger C."/>
            <person name="Peng M."/>
            <person name="Polat A.N."/>
            <person name="Heck A.J."/>
            <person name="Mohammed S."/>
        </authorList>
    </citation>
    <scope>PHOSPHORYLATION [LARGE SCALE ANALYSIS] AT SER-191</scope>
    <scope>IDENTIFICATION BY MASS SPECTROMETRY [LARGE SCALE ANALYSIS]</scope>
    <source>
        <tissue>Cervix carcinoma</tissue>
        <tissue>Erythroleukemia</tissue>
    </source>
</reference>
<reference key="5">
    <citation type="journal article" date="2017" name="Nat. Struct. Mol. Biol.">
        <title>Site-specific mapping of the human SUMO proteome reveals co-modification with phosphorylation.</title>
        <authorList>
            <person name="Hendriks I.A."/>
            <person name="Lyon D."/>
            <person name="Young C."/>
            <person name="Jensen L.J."/>
            <person name="Vertegaal A.C."/>
            <person name="Nielsen M.L."/>
        </authorList>
    </citation>
    <scope>SUMOYLATION [LARGE SCALE ANALYSIS] AT LYS-108</scope>
    <scope>IDENTIFICATION BY MASS SPECTROMETRY [LARGE SCALE ANALYSIS]</scope>
</reference>
<organism>
    <name type="scientific">Homo sapiens</name>
    <name type="common">Human</name>
    <dbReference type="NCBI Taxonomy" id="9606"/>
    <lineage>
        <taxon>Eukaryota</taxon>
        <taxon>Metazoa</taxon>
        <taxon>Chordata</taxon>
        <taxon>Craniata</taxon>
        <taxon>Vertebrata</taxon>
        <taxon>Euteleostomi</taxon>
        <taxon>Mammalia</taxon>
        <taxon>Eutheria</taxon>
        <taxon>Euarchontoglires</taxon>
        <taxon>Primates</taxon>
        <taxon>Haplorrhini</taxon>
        <taxon>Catarrhini</taxon>
        <taxon>Hominidae</taxon>
        <taxon>Homo</taxon>
    </lineage>
</organism>
<dbReference type="EMBL" id="X82125">
    <property type="protein sequence ID" value="CAA57637.1"/>
    <property type="molecule type" value="mRNA"/>
</dbReference>
<dbReference type="EMBL" id="X82126">
    <property type="protein sequence ID" value="CAA57638.1"/>
    <property type="molecule type" value="Genomic_DNA"/>
</dbReference>
<dbReference type="EMBL" id="AL450326">
    <property type="status" value="NOT_ANNOTATED_CDS"/>
    <property type="molecule type" value="Genomic_DNA"/>
</dbReference>
<dbReference type="EMBL" id="BC026030">
    <property type="protein sequence ID" value="AAH26030.1"/>
    <property type="molecule type" value="mRNA"/>
</dbReference>
<dbReference type="CCDS" id="CCDS41502.1"/>
<dbReference type="RefSeq" id="NP_001092752.1">
    <property type="nucleotide sequence ID" value="NM_001099282.2"/>
</dbReference>
<dbReference type="RefSeq" id="NP_001092753.1">
    <property type="nucleotide sequence ID" value="NM_001099283.2"/>
</dbReference>
<dbReference type="RefSeq" id="NP_001092754.1">
    <property type="nucleotide sequence ID" value="NM_001099284.2"/>
</dbReference>
<dbReference type="RefSeq" id="NP_001311276.1">
    <property type="nucleotide sequence ID" value="NM_001324347.2"/>
</dbReference>
<dbReference type="RefSeq" id="NP_001311277.1">
    <property type="nucleotide sequence ID" value="NM_001324348.2"/>
</dbReference>
<dbReference type="RefSeq" id="NP_001311278.1">
    <property type="nucleotide sequence ID" value="NM_001324349.2"/>
</dbReference>
<dbReference type="RefSeq" id="NP_001311279.1">
    <property type="nucleotide sequence ID" value="NM_001324350.2"/>
</dbReference>
<dbReference type="RefSeq" id="NP_001311280.1">
    <property type="nucleotide sequence ID" value="NM_001324351.2"/>
</dbReference>
<dbReference type="RefSeq" id="NP_005665.2">
    <property type="nucleotide sequence ID" value="NM_005674.3"/>
</dbReference>
<dbReference type="RefSeq" id="XP_005271889.1">
    <property type="nucleotide sequence ID" value="XM_005271832.2"/>
</dbReference>
<dbReference type="RefSeq" id="XP_006718066.1">
    <property type="nucleotide sequence ID" value="XM_006718003.4"/>
</dbReference>
<dbReference type="RefSeq" id="XP_011538540.1">
    <property type="nucleotide sequence ID" value="XM_011540238.3"/>
</dbReference>
<dbReference type="RefSeq" id="XP_054222842.1">
    <property type="nucleotide sequence ID" value="XM_054366867.1"/>
</dbReference>
<dbReference type="RefSeq" id="XP_054222843.1">
    <property type="nucleotide sequence ID" value="XM_054366868.1"/>
</dbReference>
<dbReference type="SMR" id="Q16600"/>
<dbReference type="BioGRID" id="113831">
    <property type="interactions" value="11"/>
</dbReference>
<dbReference type="FunCoup" id="Q16600">
    <property type="interactions" value="148"/>
</dbReference>
<dbReference type="IntAct" id="Q16600">
    <property type="interactions" value="10"/>
</dbReference>
<dbReference type="STRING" id="9606.ENSP00000307774"/>
<dbReference type="iPTMnet" id="Q16600"/>
<dbReference type="PhosphoSitePlus" id="Q16600"/>
<dbReference type="BioMuta" id="ZNF239"/>
<dbReference type="DMDM" id="251757424"/>
<dbReference type="jPOST" id="Q16600"/>
<dbReference type="MassIVE" id="Q16600"/>
<dbReference type="PaxDb" id="9606-ENSP00000307774"/>
<dbReference type="PeptideAtlas" id="Q16600"/>
<dbReference type="ProteomicsDB" id="60941"/>
<dbReference type="Pumba" id="Q16600"/>
<dbReference type="Antibodypedia" id="6019">
    <property type="antibodies" value="112 antibodies from 20 providers"/>
</dbReference>
<dbReference type="DNASU" id="8187"/>
<dbReference type="Ensembl" id="ENST00000306006.10">
    <property type="protein sequence ID" value="ENSP00000307774.6"/>
    <property type="gene ID" value="ENSG00000196793.14"/>
</dbReference>
<dbReference type="Ensembl" id="ENST00000374446.7">
    <property type="protein sequence ID" value="ENSP00000363569.1"/>
    <property type="gene ID" value="ENSG00000196793.14"/>
</dbReference>
<dbReference type="Ensembl" id="ENST00000426961.1">
    <property type="protein sequence ID" value="ENSP00000398202.1"/>
    <property type="gene ID" value="ENSG00000196793.14"/>
</dbReference>
<dbReference type="Ensembl" id="ENST00000535642.5">
    <property type="protein sequence ID" value="ENSP00000443907.1"/>
    <property type="gene ID" value="ENSG00000196793.14"/>
</dbReference>
<dbReference type="GeneID" id="8187"/>
<dbReference type="KEGG" id="hsa:8187"/>
<dbReference type="MANE-Select" id="ENST00000374446.7">
    <property type="protein sequence ID" value="ENSP00000363569.1"/>
    <property type="RefSeq nucleotide sequence ID" value="NM_001099282.2"/>
    <property type="RefSeq protein sequence ID" value="NP_001092752.1"/>
</dbReference>
<dbReference type="UCSC" id="uc001jaw.5">
    <property type="organism name" value="human"/>
</dbReference>
<dbReference type="AGR" id="HGNC:13031"/>
<dbReference type="CTD" id="8187"/>
<dbReference type="DisGeNET" id="8187"/>
<dbReference type="GeneCards" id="ZNF239"/>
<dbReference type="HGNC" id="HGNC:13031">
    <property type="gene designation" value="ZNF239"/>
</dbReference>
<dbReference type="HPA" id="ENSG00000196793">
    <property type="expression patterns" value="Low tissue specificity"/>
</dbReference>
<dbReference type="MIM" id="601069">
    <property type="type" value="gene"/>
</dbReference>
<dbReference type="neXtProt" id="NX_Q16600"/>
<dbReference type="OpenTargets" id="ENSG00000196793"/>
<dbReference type="PharmGKB" id="PA37609"/>
<dbReference type="VEuPathDB" id="HostDB:ENSG00000196793"/>
<dbReference type="eggNOG" id="KOG1721">
    <property type="taxonomic scope" value="Eukaryota"/>
</dbReference>
<dbReference type="GeneTree" id="ENSGT00940000163366"/>
<dbReference type="HOGENOM" id="CLU_002678_12_0_1"/>
<dbReference type="InParanoid" id="Q16600"/>
<dbReference type="OMA" id="IHREVHA"/>
<dbReference type="OrthoDB" id="654211at2759"/>
<dbReference type="PAN-GO" id="Q16600">
    <property type="GO annotations" value="3 GO annotations based on evolutionary models"/>
</dbReference>
<dbReference type="PhylomeDB" id="Q16600"/>
<dbReference type="TreeFam" id="TF350845"/>
<dbReference type="PathwayCommons" id="Q16600"/>
<dbReference type="SignaLink" id="Q16600"/>
<dbReference type="SIGNOR" id="Q16600"/>
<dbReference type="BioGRID-ORCS" id="8187">
    <property type="hits" value="11 hits in 1177 CRISPR screens"/>
</dbReference>
<dbReference type="ChiTaRS" id="ZNF239">
    <property type="organism name" value="human"/>
</dbReference>
<dbReference type="GeneWiki" id="ZNF239"/>
<dbReference type="GenomeRNAi" id="8187"/>
<dbReference type="Pharos" id="Q16600">
    <property type="development level" value="Tbio"/>
</dbReference>
<dbReference type="PRO" id="PR:Q16600"/>
<dbReference type="Proteomes" id="UP000005640">
    <property type="component" value="Chromosome 10"/>
</dbReference>
<dbReference type="RNAct" id="Q16600">
    <property type="molecule type" value="protein"/>
</dbReference>
<dbReference type="Bgee" id="ENSG00000196793">
    <property type="expression patterns" value="Expressed in primordial germ cell in gonad and 114 other cell types or tissues"/>
</dbReference>
<dbReference type="GO" id="GO:0005634">
    <property type="term" value="C:nucleus"/>
    <property type="evidence" value="ECO:0007669"/>
    <property type="project" value="UniProtKB-SubCell"/>
</dbReference>
<dbReference type="GO" id="GO:0003677">
    <property type="term" value="F:DNA binding"/>
    <property type="evidence" value="ECO:0000304"/>
    <property type="project" value="ProtInc"/>
</dbReference>
<dbReference type="GO" id="GO:0000981">
    <property type="term" value="F:DNA-binding transcription factor activity, RNA polymerase II-specific"/>
    <property type="evidence" value="ECO:0000318"/>
    <property type="project" value="GO_Central"/>
</dbReference>
<dbReference type="GO" id="GO:0001227">
    <property type="term" value="F:DNA-binding transcription repressor activity, RNA polymerase II-specific"/>
    <property type="evidence" value="ECO:0000314"/>
    <property type="project" value="NTNU_SB"/>
</dbReference>
<dbReference type="GO" id="GO:0003723">
    <property type="term" value="F:RNA binding"/>
    <property type="evidence" value="ECO:0000304"/>
    <property type="project" value="ProtInc"/>
</dbReference>
<dbReference type="GO" id="GO:0000978">
    <property type="term" value="F:RNA polymerase II cis-regulatory region sequence-specific DNA binding"/>
    <property type="evidence" value="ECO:0000315"/>
    <property type="project" value="NTNU_SB"/>
</dbReference>
<dbReference type="GO" id="GO:0008270">
    <property type="term" value="F:zinc ion binding"/>
    <property type="evidence" value="ECO:0007669"/>
    <property type="project" value="UniProtKB-KW"/>
</dbReference>
<dbReference type="GO" id="GO:0000122">
    <property type="term" value="P:negative regulation of transcription by RNA polymerase II"/>
    <property type="evidence" value="ECO:0000314"/>
    <property type="project" value="NTNU_SB"/>
</dbReference>
<dbReference type="GO" id="GO:0006357">
    <property type="term" value="P:regulation of transcription by RNA polymerase II"/>
    <property type="evidence" value="ECO:0000318"/>
    <property type="project" value="GO_Central"/>
</dbReference>
<dbReference type="FunFam" id="3.30.160.60:FF:000029">
    <property type="entry name" value="GLI family zinc finger 4"/>
    <property type="match status" value="2"/>
</dbReference>
<dbReference type="FunFam" id="3.30.160.60:FF:001158">
    <property type="entry name" value="zinc finger protein 22"/>
    <property type="match status" value="1"/>
</dbReference>
<dbReference type="FunFam" id="3.30.160.60:FF:000363">
    <property type="entry name" value="Zinc finger protein 239"/>
    <property type="match status" value="1"/>
</dbReference>
<dbReference type="FunFam" id="3.30.160.60:FF:001195">
    <property type="entry name" value="Zinc finger protein 239"/>
    <property type="match status" value="2"/>
</dbReference>
<dbReference type="FunFam" id="3.30.160.60:FF:002343">
    <property type="entry name" value="Zinc finger protein 33A"/>
    <property type="match status" value="1"/>
</dbReference>
<dbReference type="FunFam" id="3.30.160.60:FF:000902">
    <property type="entry name" value="Zinc finger protein 445"/>
    <property type="match status" value="1"/>
</dbReference>
<dbReference type="FunFam" id="3.30.160.60:FF:002357">
    <property type="entry name" value="Zinc finger protein 782"/>
    <property type="match status" value="1"/>
</dbReference>
<dbReference type="Gene3D" id="3.30.160.60">
    <property type="entry name" value="Classic Zinc Finger"/>
    <property type="match status" value="9"/>
</dbReference>
<dbReference type="InterPro" id="IPR036236">
    <property type="entry name" value="Znf_C2H2_sf"/>
</dbReference>
<dbReference type="InterPro" id="IPR013087">
    <property type="entry name" value="Znf_C2H2_type"/>
</dbReference>
<dbReference type="PANTHER" id="PTHR24381">
    <property type="entry name" value="ZINC FINGER PROTEIN"/>
    <property type="match status" value="1"/>
</dbReference>
<dbReference type="PANTHER" id="PTHR24381:SF443">
    <property type="entry name" value="ZINC FINGER PROTEIN CKR1"/>
    <property type="match status" value="1"/>
</dbReference>
<dbReference type="Pfam" id="PF00096">
    <property type="entry name" value="zf-C2H2"/>
    <property type="match status" value="9"/>
</dbReference>
<dbReference type="SMART" id="SM00355">
    <property type="entry name" value="ZnF_C2H2"/>
    <property type="match status" value="9"/>
</dbReference>
<dbReference type="SUPFAM" id="SSF57667">
    <property type="entry name" value="beta-beta-alpha zinc fingers"/>
    <property type="match status" value="6"/>
</dbReference>
<dbReference type="PROSITE" id="PS00028">
    <property type="entry name" value="ZINC_FINGER_C2H2_1"/>
    <property type="match status" value="9"/>
</dbReference>
<dbReference type="PROSITE" id="PS50157">
    <property type="entry name" value="ZINC_FINGER_C2H2_2"/>
    <property type="match status" value="9"/>
</dbReference>
<keyword id="KW-0238">DNA-binding</keyword>
<keyword id="KW-1017">Isopeptide bond</keyword>
<keyword id="KW-0479">Metal-binding</keyword>
<keyword id="KW-0539">Nucleus</keyword>
<keyword id="KW-0597">Phosphoprotein</keyword>
<keyword id="KW-1267">Proteomics identification</keyword>
<keyword id="KW-1185">Reference proteome</keyword>
<keyword id="KW-0677">Repeat</keyword>
<keyword id="KW-0804">Transcription</keyword>
<keyword id="KW-0805">Transcription regulation</keyword>
<keyword id="KW-0832">Ubl conjugation</keyword>
<keyword id="KW-0862">Zinc</keyword>
<keyword id="KW-0863">Zinc-finger</keyword>
<accession>Q16600</accession>
<accession>Q5T1G9</accession>
<accession>Q8TAS5</accession>